<accession>A7ZX42</accession>
<proteinExistence type="inferred from homology"/>
<gene>
    <name evidence="1" type="primary">rdgC</name>
    <name type="ordered locus">EcHS_A0461</name>
</gene>
<comment type="function">
    <text evidence="1">May be involved in recombination.</text>
</comment>
<comment type="subcellular location">
    <subcellularLocation>
        <location evidence="1">Cytoplasm</location>
        <location evidence="1">Nucleoid</location>
    </subcellularLocation>
</comment>
<comment type="similarity">
    <text evidence="1">Belongs to the RdgC family.</text>
</comment>
<reference key="1">
    <citation type="journal article" date="2008" name="J. Bacteriol.">
        <title>The pangenome structure of Escherichia coli: comparative genomic analysis of E. coli commensal and pathogenic isolates.</title>
        <authorList>
            <person name="Rasko D.A."/>
            <person name="Rosovitz M.J."/>
            <person name="Myers G.S.A."/>
            <person name="Mongodin E.F."/>
            <person name="Fricke W.F."/>
            <person name="Gajer P."/>
            <person name="Crabtree J."/>
            <person name="Sebaihia M."/>
            <person name="Thomson N.R."/>
            <person name="Chaudhuri R."/>
            <person name="Henderson I.R."/>
            <person name="Sperandio V."/>
            <person name="Ravel J."/>
        </authorList>
    </citation>
    <scope>NUCLEOTIDE SEQUENCE [LARGE SCALE GENOMIC DNA]</scope>
    <source>
        <strain>HS</strain>
    </source>
</reference>
<dbReference type="EMBL" id="CP000802">
    <property type="protein sequence ID" value="ABV04846.1"/>
    <property type="molecule type" value="Genomic_DNA"/>
</dbReference>
<dbReference type="RefSeq" id="WP_001298537.1">
    <property type="nucleotide sequence ID" value="NC_009800.1"/>
</dbReference>
<dbReference type="SMR" id="A7ZX42"/>
<dbReference type="GeneID" id="75202816"/>
<dbReference type="KEGG" id="ecx:EcHS_A0461"/>
<dbReference type="HOGENOM" id="CLU_052038_1_1_6"/>
<dbReference type="GO" id="GO:0043590">
    <property type="term" value="C:bacterial nucleoid"/>
    <property type="evidence" value="ECO:0007669"/>
    <property type="project" value="TreeGrafter"/>
</dbReference>
<dbReference type="GO" id="GO:0005737">
    <property type="term" value="C:cytoplasm"/>
    <property type="evidence" value="ECO:0007669"/>
    <property type="project" value="UniProtKB-UniRule"/>
</dbReference>
<dbReference type="GO" id="GO:0003690">
    <property type="term" value="F:double-stranded DNA binding"/>
    <property type="evidence" value="ECO:0007669"/>
    <property type="project" value="TreeGrafter"/>
</dbReference>
<dbReference type="GO" id="GO:0006310">
    <property type="term" value="P:DNA recombination"/>
    <property type="evidence" value="ECO:0007669"/>
    <property type="project" value="UniProtKB-UniRule"/>
</dbReference>
<dbReference type="GO" id="GO:0000018">
    <property type="term" value="P:regulation of DNA recombination"/>
    <property type="evidence" value="ECO:0007669"/>
    <property type="project" value="TreeGrafter"/>
</dbReference>
<dbReference type="HAMAP" id="MF_00194">
    <property type="entry name" value="RdgC"/>
    <property type="match status" value="1"/>
</dbReference>
<dbReference type="InterPro" id="IPR007476">
    <property type="entry name" value="RdgC"/>
</dbReference>
<dbReference type="NCBIfam" id="NF001460">
    <property type="entry name" value="PRK00321.1-1"/>
    <property type="match status" value="1"/>
</dbReference>
<dbReference type="NCBIfam" id="NF001462">
    <property type="entry name" value="PRK00321.1-3"/>
    <property type="match status" value="1"/>
</dbReference>
<dbReference type="NCBIfam" id="NF001464">
    <property type="entry name" value="PRK00321.1-5"/>
    <property type="match status" value="1"/>
</dbReference>
<dbReference type="PANTHER" id="PTHR38103">
    <property type="entry name" value="RECOMBINATION-ASSOCIATED PROTEIN RDGC"/>
    <property type="match status" value="1"/>
</dbReference>
<dbReference type="PANTHER" id="PTHR38103:SF1">
    <property type="entry name" value="RECOMBINATION-ASSOCIATED PROTEIN RDGC"/>
    <property type="match status" value="1"/>
</dbReference>
<dbReference type="Pfam" id="PF04381">
    <property type="entry name" value="RdgC"/>
    <property type="match status" value="1"/>
</dbReference>
<keyword id="KW-0963">Cytoplasm</keyword>
<keyword id="KW-0233">DNA recombination</keyword>
<feature type="chain" id="PRO_1000058514" description="Recombination-associated protein RdgC">
    <location>
        <begin position="1"/>
        <end position="303"/>
    </location>
</feature>
<name>RDGC_ECOHS</name>
<protein>
    <recommendedName>
        <fullName evidence="1">Recombination-associated protein RdgC</fullName>
    </recommendedName>
</protein>
<organism>
    <name type="scientific">Escherichia coli O9:H4 (strain HS)</name>
    <dbReference type="NCBI Taxonomy" id="331112"/>
    <lineage>
        <taxon>Bacteria</taxon>
        <taxon>Pseudomonadati</taxon>
        <taxon>Pseudomonadota</taxon>
        <taxon>Gammaproteobacteria</taxon>
        <taxon>Enterobacterales</taxon>
        <taxon>Enterobacteriaceae</taxon>
        <taxon>Escherichia</taxon>
    </lineage>
</organism>
<sequence>MLWFKNLMVYRLSREISLRAEEMEKQLASMAFTPCGSQDMAKMGWVPPMGSHSDALTHVANGQIVICARKEEKILPSPVIKQALEAKIAKLEAEQARKLKKTEKDSLKDEVLHSLLPRAFSRFSQTMMWIDTVNGLIMVDCASAKKAEDTLALLRKSLGSLPVVPLSMENPIELTLTEWVRSGSAAQGFQLLDEAELKSLLEDGGVIRAKKQDLTSEEITNHIEAGKVVTKLALDWQQRIQFVMCDDGSLKRLKFCDELRDQNEDIDREDFAQRFDADFILMTGELAALIQNLIEGLGGEAQR</sequence>
<evidence type="ECO:0000255" key="1">
    <source>
        <dbReference type="HAMAP-Rule" id="MF_00194"/>
    </source>
</evidence>